<accession>Q601J6</accession>
<gene>
    <name evidence="1" type="primary">rplO</name>
    <name type="synonym">rpl15</name>
    <name type="ordered locus">mhp206</name>
</gene>
<name>RL15_MESH2</name>
<dbReference type="EMBL" id="AE017332">
    <property type="protein sequence ID" value="AAV27462.1"/>
    <property type="molecule type" value="Genomic_DNA"/>
</dbReference>
<dbReference type="RefSeq" id="WP_011206043.1">
    <property type="nucleotide sequence ID" value="NC_006360.1"/>
</dbReference>
<dbReference type="SMR" id="Q601J6"/>
<dbReference type="KEGG" id="mhy:mhp206"/>
<dbReference type="eggNOG" id="COG0200">
    <property type="taxonomic scope" value="Bacteria"/>
</dbReference>
<dbReference type="HOGENOM" id="CLU_055188_4_1_14"/>
<dbReference type="PhylomeDB" id="Q601J6"/>
<dbReference type="Proteomes" id="UP000006822">
    <property type="component" value="Chromosome"/>
</dbReference>
<dbReference type="GO" id="GO:0022625">
    <property type="term" value="C:cytosolic large ribosomal subunit"/>
    <property type="evidence" value="ECO:0007669"/>
    <property type="project" value="TreeGrafter"/>
</dbReference>
<dbReference type="GO" id="GO:0019843">
    <property type="term" value="F:rRNA binding"/>
    <property type="evidence" value="ECO:0007669"/>
    <property type="project" value="UniProtKB-UniRule"/>
</dbReference>
<dbReference type="GO" id="GO:0003735">
    <property type="term" value="F:structural constituent of ribosome"/>
    <property type="evidence" value="ECO:0007669"/>
    <property type="project" value="InterPro"/>
</dbReference>
<dbReference type="GO" id="GO:0006412">
    <property type="term" value="P:translation"/>
    <property type="evidence" value="ECO:0007669"/>
    <property type="project" value="UniProtKB-UniRule"/>
</dbReference>
<dbReference type="Gene3D" id="3.100.10.10">
    <property type="match status" value="1"/>
</dbReference>
<dbReference type="HAMAP" id="MF_01341">
    <property type="entry name" value="Ribosomal_uL15"/>
    <property type="match status" value="1"/>
</dbReference>
<dbReference type="InterPro" id="IPR030878">
    <property type="entry name" value="Ribosomal_uL15"/>
</dbReference>
<dbReference type="InterPro" id="IPR021131">
    <property type="entry name" value="Ribosomal_uL15/eL18"/>
</dbReference>
<dbReference type="InterPro" id="IPR036227">
    <property type="entry name" value="Ribosomal_uL15/eL18_sf"/>
</dbReference>
<dbReference type="InterPro" id="IPR005749">
    <property type="entry name" value="Ribosomal_uL15_bac-type"/>
</dbReference>
<dbReference type="InterPro" id="IPR001196">
    <property type="entry name" value="Ribosomal_uL15_CS"/>
</dbReference>
<dbReference type="NCBIfam" id="TIGR01071">
    <property type="entry name" value="rplO_bact"/>
    <property type="match status" value="1"/>
</dbReference>
<dbReference type="PANTHER" id="PTHR12934">
    <property type="entry name" value="50S RIBOSOMAL PROTEIN L15"/>
    <property type="match status" value="1"/>
</dbReference>
<dbReference type="PANTHER" id="PTHR12934:SF11">
    <property type="entry name" value="LARGE RIBOSOMAL SUBUNIT PROTEIN UL15M"/>
    <property type="match status" value="1"/>
</dbReference>
<dbReference type="Pfam" id="PF00828">
    <property type="entry name" value="Ribosomal_L27A"/>
    <property type="match status" value="1"/>
</dbReference>
<dbReference type="SUPFAM" id="SSF52080">
    <property type="entry name" value="Ribosomal proteins L15p and L18e"/>
    <property type="match status" value="1"/>
</dbReference>
<dbReference type="PROSITE" id="PS00475">
    <property type="entry name" value="RIBOSOMAL_L15"/>
    <property type="match status" value="1"/>
</dbReference>
<evidence type="ECO:0000255" key="1">
    <source>
        <dbReference type="HAMAP-Rule" id="MF_01341"/>
    </source>
</evidence>
<evidence type="ECO:0000256" key="2">
    <source>
        <dbReference type="SAM" id="MobiDB-lite"/>
    </source>
</evidence>
<evidence type="ECO:0000305" key="3"/>
<reference key="1">
    <citation type="journal article" date="2004" name="J. Bacteriol.">
        <title>The genome sequence of Mycoplasma hyopneumoniae strain 232, the agent of swine mycoplasmosis.</title>
        <authorList>
            <person name="Minion F.C."/>
            <person name="Lefkowitz E.J."/>
            <person name="Madsen M.L."/>
            <person name="Cleary B.J."/>
            <person name="Swartzell S.M."/>
            <person name="Mahairas G.G."/>
        </authorList>
    </citation>
    <scope>NUCLEOTIDE SEQUENCE [LARGE SCALE GENOMIC DNA]</scope>
    <source>
        <strain>232</strain>
    </source>
</reference>
<sequence length="147" mass="16665">MSIRLENLSYTPGARKEKHRKGRGHAAGKGKQAGRGQSGQKKRSTVRLGFEGGQNPWFRRVPKRGFRNFNKKEYEIFNLSDLESRYQDGDTVSLESLYLKKVLKKRNLKAKLLANGDLTKKLTVTTNAFSIAAQKKIEEKGGKIEVR</sequence>
<organism>
    <name type="scientific">Mesomycoplasma hyopneumoniae (strain 232)</name>
    <name type="common">Mycoplasma hyopneumoniae</name>
    <dbReference type="NCBI Taxonomy" id="295358"/>
    <lineage>
        <taxon>Bacteria</taxon>
        <taxon>Bacillati</taxon>
        <taxon>Mycoplasmatota</taxon>
        <taxon>Mycoplasmoidales</taxon>
        <taxon>Metamycoplasmataceae</taxon>
        <taxon>Mesomycoplasma</taxon>
    </lineage>
</organism>
<keyword id="KW-0687">Ribonucleoprotein</keyword>
<keyword id="KW-0689">Ribosomal protein</keyword>
<keyword id="KW-0694">RNA-binding</keyword>
<keyword id="KW-0699">rRNA-binding</keyword>
<feature type="chain" id="PRO_0000104759" description="Large ribosomal subunit protein uL15">
    <location>
        <begin position="1"/>
        <end position="147"/>
    </location>
</feature>
<feature type="region of interest" description="Disordered" evidence="2">
    <location>
        <begin position="1"/>
        <end position="46"/>
    </location>
</feature>
<feature type="compositionally biased region" description="Basic residues" evidence="2">
    <location>
        <begin position="16"/>
        <end position="28"/>
    </location>
</feature>
<protein>
    <recommendedName>
        <fullName evidence="1">Large ribosomal subunit protein uL15</fullName>
    </recommendedName>
    <alternativeName>
        <fullName evidence="3">50S ribosomal protein L15</fullName>
    </alternativeName>
</protein>
<comment type="function">
    <text evidence="1">Binds to the 23S rRNA.</text>
</comment>
<comment type="subunit">
    <text evidence="1">Part of the 50S ribosomal subunit.</text>
</comment>
<comment type="similarity">
    <text evidence="1">Belongs to the universal ribosomal protein uL15 family.</text>
</comment>
<proteinExistence type="inferred from homology"/>